<name>MCPI_SOLTU</name>
<proteinExistence type="evidence at protein level"/>
<keyword id="KW-0002">3D-structure</keyword>
<keyword id="KW-0903">Direct protein sequencing</keyword>
<keyword id="KW-1015">Disulfide bond</keyword>
<keyword id="KW-0960">Knottin</keyword>
<keyword id="KW-0481">Metalloenzyme inhibitor</keyword>
<keyword id="KW-0873">Pyrrolidone carboxylic acid</keyword>
<keyword id="KW-1185">Reference proteome</keyword>
<protein>
    <recommendedName>
        <fullName>Metallocarboxypeptidase inhibitor</fullName>
        <shortName>Carboxypeptidase inhibitor</shortName>
        <shortName>MCPI</shortName>
    </recommendedName>
</protein>
<dbReference type="PDB" id="1H20">
    <property type="method" value="NMR"/>
    <property type="chains" value="A=2-39"/>
</dbReference>
<dbReference type="PDB" id="4CPA">
    <property type="method" value="X-ray"/>
    <property type="resolution" value="2.50 A"/>
    <property type="chains" value="I/J=3-38"/>
</dbReference>
<dbReference type="PDB" id="7EQZ">
    <property type="method" value="X-ray"/>
    <property type="resolution" value="2.20 A"/>
    <property type="chains" value="I=3-38"/>
</dbReference>
<dbReference type="PDBsum" id="1H20"/>
<dbReference type="PDBsum" id="4CPA"/>
<dbReference type="PDBsum" id="7EQZ"/>
<dbReference type="BMRB" id="P01075"/>
<dbReference type="SMR" id="P01075"/>
<dbReference type="MINT" id="P01075"/>
<dbReference type="STRING" id="4113.P01075"/>
<dbReference type="MEROPS" id="I37.001"/>
<dbReference type="InParanoid" id="P01075"/>
<dbReference type="EvolutionaryTrace" id="P01075"/>
<dbReference type="Proteomes" id="UP000011115">
    <property type="component" value="Unassembled WGS sequence"/>
</dbReference>
<dbReference type="GO" id="GO:0004866">
    <property type="term" value="F:endopeptidase inhibitor activity"/>
    <property type="evidence" value="ECO:0007669"/>
    <property type="project" value="InterPro"/>
</dbReference>
<dbReference type="InterPro" id="IPR004231">
    <property type="entry name" value="COpept_A_inh-like"/>
</dbReference>
<dbReference type="InterPro" id="IPR011052">
    <property type="entry name" value="Proteinase_amylase_inhib_sf"/>
</dbReference>
<dbReference type="Pfam" id="PF02977">
    <property type="entry name" value="CarbpepA_inh"/>
    <property type="match status" value="1"/>
</dbReference>
<dbReference type="SUPFAM" id="SSF57027">
    <property type="entry name" value="Plant inhibitors of proteinases and amylases"/>
    <property type="match status" value="1"/>
</dbReference>
<feature type="chain" id="PRO_0000096302" description="Metallocarboxypeptidase inhibitor">
    <location>
        <begin position="1"/>
        <end position="39"/>
    </location>
</feature>
<feature type="site" description="Interaction with carboxypeptidase">
    <location>
        <position position="38"/>
    </location>
</feature>
<feature type="modified residue" description="Pyrrolidone carboxylic acid" evidence="1">
    <location>
        <position position="1"/>
    </location>
</feature>
<feature type="disulfide bond" evidence="2 3 4 5 6">
    <location>
        <begin position="8"/>
        <end position="24"/>
    </location>
</feature>
<feature type="disulfide bond" evidence="2 3 4 5 6">
    <location>
        <begin position="12"/>
        <end position="27"/>
    </location>
</feature>
<feature type="disulfide bond" evidence="2 3 4 5 6">
    <location>
        <begin position="18"/>
        <end position="34"/>
    </location>
</feature>
<feature type="sequence variant" description="In 50% of the molecules.">
    <location>
        <position position="2"/>
    </location>
</feature>
<feature type="turn" evidence="7">
    <location>
        <begin position="6"/>
        <end position="9"/>
    </location>
</feature>
<feature type="helix" evidence="7">
    <location>
        <begin position="15"/>
        <end position="18"/>
    </location>
</feature>
<feature type="strand" evidence="7">
    <location>
        <begin position="22"/>
        <end position="24"/>
    </location>
</feature>
<feature type="turn" evidence="7">
    <location>
        <begin position="29"/>
        <end position="31"/>
    </location>
</feature>
<feature type="strand" evidence="7">
    <location>
        <begin position="33"/>
        <end position="35"/>
    </location>
</feature>
<reference key="1">
    <citation type="journal article" date="1975" name="Biochemistry">
        <title>The amino acid sequence of a carboxypeptidase inhibitor from potatoes.</title>
        <authorList>
            <person name="Hass G.M."/>
            <person name="Nau H."/>
            <person name="Biemann K."/>
            <person name="Grahn D.T."/>
            <person name="Ericsson L.H."/>
            <person name="Neurath H."/>
        </authorList>
    </citation>
    <scope>PROTEIN SEQUENCE</scope>
    <scope>PYROGLUTAMATE FORMATION AT GLN-1</scope>
</reference>
<reference key="2">
    <citation type="journal article" date="1976" name="Anal. Biochem.">
        <title>Amino acid sequencing by gas chromatography -- mass spectrometry using trifluoro-dideuteroalkylated peptide derivatives. C. The primary structure of the carboxypeptidase inhibitor from potatoes.</title>
        <authorList>
            <person name="Nau H."/>
            <person name="Biemann K."/>
        </authorList>
    </citation>
    <scope>PROTEIN SEQUENCE</scope>
</reference>
<reference key="3">
    <citation type="journal article" date="1979" name="Biochemistry">
        <title>Structure of potato carboxypeptidase inhibitor: disulfide pairing and exposure of aromatic residues.</title>
        <authorList>
            <person name="Leary T.R."/>
            <person name="Grahn D.T."/>
            <person name="Neurath H."/>
            <person name="Hass G.M."/>
        </authorList>
    </citation>
    <scope>DISULFIDE BONDS</scope>
</reference>
<reference evidence="5" key="4">
    <citation type="journal article" date="1982" name="J. Mol. Biol.">
        <title>Refined crystal structure of the potato inhibitor complex of carboxypeptidase A at 2.5-A resolution.</title>
        <authorList>
            <person name="Rees D.C."/>
            <person name="Lipscomb W.N."/>
        </authorList>
    </citation>
    <scope>X-RAY CRYSTALLOGRAPHY (2.5 ANGSTROMS) IN COMPLEX WITH BOVINE CPA1</scope>
    <scope>DISULFIDE BONDS</scope>
</reference>
<reference evidence="6" key="5">
    <citation type="journal article" date="2021" name="Protein Sci.">
        <title>Structure of Aedes aegypti carboxypeptidase B1-inhibitor complex uncover the disparity between mosquito and non-mosquito insect carboxypeptidase inhibition mechanism.</title>
        <authorList>
            <person name="Gavor E."/>
            <person name="Choong Y.K."/>
            <person name="Jobichen C."/>
            <person name="Mok Y.K."/>
            <person name="Kini R.M."/>
            <person name="Sivaraman J."/>
        </authorList>
    </citation>
    <scope>X-RAY CRYSTALLOGRAPHY (2.20 ANGSTROMS) OF 3-38 IN COMPLEX WITH A.AEGYPTI CPB1</scope>
    <scope>FUNCTION</scope>
    <scope>DISULFIDE BONDS</scope>
</reference>
<accession>P01075</accession>
<sequence>QQHADPICNKPCKTHDDCSGAWFCQACWNSARTCGPYVG</sequence>
<evidence type="ECO:0000269" key="1">
    <source>
    </source>
</evidence>
<evidence type="ECO:0000269" key="2">
    <source>
    </source>
</evidence>
<evidence type="ECO:0000269" key="3">
    <source>
    </source>
</evidence>
<evidence type="ECO:0000269" key="4">
    <source>
    </source>
</evidence>
<evidence type="ECO:0007744" key="5">
    <source>
        <dbReference type="PDB" id="4CPA"/>
    </source>
</evidence>
<evidence type="ECO:0007744" key="6">
    <source>
        <dbReference type="PDB" id="7EQZ"/>
    </source>
</evidence>
<evidence type="ECO:0007829" key="7">
    <source>
        <dbReference type="PDB" id="7EQZ"/>
    </source>
</evidence>
<organism>
    <name type="scientific">Solanum tuberosum</name>
    <name type="common">Potato</name>
    <dbReference type="NCBI Taxonomy" id="4113"/>
    <lineage>
        <taxon>Eukaryota</taxon>
        <taxon>Viridiplantae</taxon>
        <taxon>Streptophyta</taxon>
        <taxon>Embryophyta</taxon>
        <taxon>Tracheophyta</taxon>
        <taxon>Spermatophyta</taxon>
        <taxon>Magnoliopsida</taxon>
        <taxon>eudicotyledons</taxon>
        <taxon>Gunneridae</taxon>
        <taxon>Pentapetalae</taxon>
        <taxon>asterids</taxon>
        <taxon>lamiids</taxon>
        <taxon>Solanales</taxon>
        <taxon>Solanaceae</taxon>
        <taxon>Solanoideae</taxon>
        <taxon>Solaneae</taxon>
        <taxon>Solanum</taxon>
    </lineage>
</organism>
<comment type="function">
    <text evidence="2">May play a defensive role against insect attacks. Inhibits A.aegypti carboxypeptidase CPB1 (PubMed:34658092).</text>
</comment>
<comment type="tissue specificity">
    <text>Highly concentrated in tubers. Closely related but distinct forms of MCPI are present in leaves, stems and buds.</text>
</comment>
<comment type="induction">
    <text>By wounding; in leaves.</text>
</comment>
<comment type="domain">
    <text>The presence of a 'disulfide through disulfide knot' structurally defines this protein as a knottin.</text>
</comment>